<reference key="1">
    <citation type="journal article" date="1995" name="Mol. Cell. Biol.">
        <title>The duplicated Saccharomyces cerevisiae gene SSM1 encodes a eucaryotic homolog of the eubacterial and archaebacterial L1 ribosomal proteins.</title>
        <authorList>
            <person name="Petitjean A."/>
            <person name="Bonneaud N."/>
            <person name="Lacroute F."/>
        </authorList>
    </citation>
    <scope>NUCLEOTIDE SEQUENCE [GENOMIC DNA]</scope>
    <source>
        <strain>ATCC 28383 / FL100 / VTT C-80102</strain>
    </source>
</reference>
<reference key="2">
    <citation type="journal article" date="1996" name="Yeast">
        <title>Sequence analysis of a 14.6 kb DNA fragment of Saccharomyces cerevisiae chromosome VII reveals SEC27, SSM1b, a putative S-adenosylmethionine-dependent enzyme and six new open reading frames.</title>
        <authorList>
            <person name="Escribano V."/>
            <person name="Eraso P."/>
            <person name="Portillo F."/>
            <person name="Mazon M.J."/>
        </authorList>
    </citation>
    <scope>NUCLEOTIDE SEQUENCE [GENOMIC DNA]</scope>
    <source>
        <strain>ATCC 96604 / S288c / FY1679</strain>
    </source>
</reference>
<reference key="3">
    <citation type="journal article" date="1997" name="Nature">
        <title>The nucleotide sequence of Saccharomyces cerevisiae chromosome VII.</title>
        <authorList>
            <person name="Tettelin H."/>
            <person name="Agostoni-Carbone M.L."/>
            <person name="Albermann K."/>
            <person name="Albers M."/>
            <person name="Arroyo J."/>
            <person name="Backes U."/>
            <person name="Barreiros T."/>
            <person name="Bertani I."/>
            <person name="Bjourson A.J."/>
            <person name="Brueckner M."/>
            <person name="Bruschi C.V."/>
            <person name="Carignani G."/>
            <person name="Castagnoli L."/>
            <person name="Cerdan E."/>
            <person name="Clemente M.L."/>
            <person name="Coblenz A."/>
            <person name="Coglievina M."/>
            <person name="Coissac E."/>
            <person name="Defoor E."/>
            <person name="Del Bino S."/>
            <person name="Delius H."/>
            <person name="Delneri D."/>
            <person name="de Wergifosse P."/>
            <person name="Dujon B."/>
            <person name="Durand P."/>
            <person name="Entian K.-D."/>
            <person name="Eraso P."/>
            <person name="Escribano V."/>
            <person name="Fabiani L."/>
            <person name="Fartmann B."/>
            <person name="Feroli F."/>
            <person name="Feuermann M."/>
            <person name="Frontali L."/>
            <person name="Garcia-Gonzalez M."/>
            <person name="Garcia-Saez M.I."/>
            <person name="Goffeau A."/>
            <person name="Guerreiro P."/>
            <person name="Hani J."/>
            <person name="Hansen M."/>
            <person name="Hebling U."/>
            <person name="Hernandez K."/>
            <person name="Heumann K."/>
            <person name="Hilger F."/>
            <person name="Hofmann B."/>
            <person name="Indge K.J."/>
            <person name="James C.M."/>
            <person name="Klima R."/>
            <person name="Koetter P."/>
            <person name="Kramer B."/>
            <person name="Kramer W."/>
            <person name="Lauquin G."/>
            <person name="Leuther H."/>
            <person name="Louis E.J."/>
            <person name="Maillier E."/>
            <person name="Marconi A."/>
            <person name="Martegani E."/>
            <person name="Mazon M.J."/>
            <person name="Mazzoni C."/>
            <person name="McReynolds A.D.K."/>
            <person name="Melchioretto P."/>
            <person name="Mewes H.-W."/>
            <person name="Minenkova O."/>
            <person name="Mueller-Auer S."/>
            <person name="Nawrocki A."/>
            <person name="Netter P."/>
            <person name="Neu R."/>
            <person name="Nombela C."/>
            <person name="Oliver S.G."/>
            <person name="Panzeri L."/>
            <person name="Paoluzi S."/>
            <person name="Plevani P."/>
            <person name="Portetelle D."/>
            <person name="Portillo F."/>
            <person name="Potier S."/>
            <person name="Purnelle B."/>
            <person name="Rieger M."/>
            <person name="Riles L."/>
            <person name="Rinaldi T."/>
            <person name="Robben J."/>
            <person name="Rodrigues-Pousada C."/>
            <person name="Rodriguez-Belmonte E."/>
            <person name="Rodriguez-Torres A.M."/>
            <person name="Rose M."/>
            <person name="Ruzzi M."/>
            <person name="Saliola M."/>
            <person name="Sanchez-Perez M."/>
            <person name="Schaefer B."/>
            <person name="Schaefer M."/>
            <person name="Scharfe M."/>
            <person name="Schmidheini T."/>
            <person name="Schreer A."/>
            <person name="Skala J."/>
            <person name="Souciet J.-L."/>
            <person name="Steensma H.Y."/>
            <person name="Talla E."/>
            <person name="Thierry A."/>
            <person name="Vandenbol M."/>
            <person name="van der Aart Q.J.M."/>
            <person name="Van Dyck L."/>
            <person name="Vanoni M."/>
            <person name="Verhasselt P."/>
            <person name="Voet M."/>
            <person name="Volckaert G."/>
            <person name="Wambutt R."/>
            <person name="Watson M.D."/>
            <person name="Weber N."/>
            <person name="Wedler E."/>
            <person name="Wedler H."/>
            <person name="Wipfli P."/>
            <person name="Wolf K."/>
            <person name="Wright L.F."/>
            <person name="Zaccaria P."/>
            <person name="Zimmermann M."/>
            <person name="Zollner A."/>
            <person name="Kleine K."/>
        </authorList>
    </citation>
    <scope>NUCLEOTIDE SEQUENCE [LARGE SCALE GENOMIC DNA]</scope>
    <source>
        <strain>ATCC 204508 / S288c</strain>
    </source>
</reference>
<reference key="4">
    <citation type="journal article" date="2014" name="G3 (Bethesda)">
        <title>The reference genome sequence of Saccharomyces cerevisiae: Then and now.</title>
        <authorList>
            <person name="Engel S.R."/>
            <person name="Dietrich F.S."/>
            <person name="Fisk D.G."/>
            <person name="Binkley G."/>
            <person name="Balakrishnan R."/>
            <person name="Costanzo M.C."/>
            <person name="Dwight S.S."/>
            <person name="Hitz B.C."/>
            <person name="Karra K."/>
            <person name="Nash R.S."/>
            <person name="Weng S."/>
            <person name="Wong E.D."/>
            <person name="Lloyd P."/>
            <person name="Skrzypek M.S."/>
            <person name="Miyasato S.R."/>
            <person name="Simison M."/>
            <person name="Cherry J.M."/>
        </authorList>
    </citation>
    <scope>GENOME REANNOTATION</scope>
    <source>
        <strain>ATCC 204508 / S288c</strain>
    </source>
</reference>
<reference key="5">
    <citation type="journal article" date="1998" name="Yeast">
        <title>The list of cytoplasmic ribosomal proteins of Saccharomyces cerevisiae.</title>
        <authorList>
            <person name="Planta R.J."/>
            <person name="Mager W.H."/>
        </authorList>
    </citation>
    <scope>NOMENCLATURE</scope>
    <scope>SUBUNIT</scope>
</reference>
<reference key="6">
    <citation type="journal article" date="1999" name="J. Biol. Chem.">
        <title>The action of N-terminal acetyltransferases on yeast ribosomal proteins.</title>
        <authorList>
            <person name="Arnold R.J."/>
            <person name="Polevoda B."/>
            <person name="Reilly J.P."/>
            <person name="Sherman F."/>
        </authorList>
    </citation>
    <scope>CLEAVAGE OF INITIATOR METHIONINE</scope>
    <scope>ACETYLATION AT SER-2 BY NATA</scope>
</reference>
<reference key="7">
    <citation type="journal article" date="2002" name="Proc. Natl. Acad. Sci. U.S.A.">
        <title>Direct mass spectrometric analysis of intact proteins of the yeast large ribosomal subunit using capillary LC/FTICR.</title>
        <authorList>
            <person name="Lee S.-W."/>
            <person name="Berger S.J."/>
            <person name="Martinovic S."/>
            <person name="Pasa-Tolic L."/>
            <person name="Anderson G.A."/>
            <person name="Shen Y."/>
            <person name="Zhao R."/>
            <person name="Smith R.D."/>
        </authorList>
    </citation>
    <scope>MASS SPECTROMETRY</scope>
</reference>
<reference key="8">
    <citation type="journal article" date="2003" name="Nature">
        <title>Global analysis of protein localization in budding yeast.</title>
        <authorList>
            <person name="Huh W.-K."/>
            <person name="Falvo J.V."/>
            <person name="Gerke L.C."/>
            <person name="Carroll A.S."/>
            <person name="Howson R.W."/>
            <person name="Weissman J.S."/>
            <person name="O'Shea E.K."/>
        </authorList>
    </citation>
    <scope>SUBCELLULAR LOCATION [LARGE SCALE ANALYSIS]</scope>
</reference>
<reference key="9">
    <citation type="journal article" date="2003" name="Nature">
        <title>Global analysis of protein expression in yeast.</title>
        <authorList>
            <person name="Ghaemmaghami S."/>
            <person name="Huh W.-K."/>
            <person name="Bower K."/>
            <person name="Howson R.W."/>
            <person name="Belle A."/>
            <person name="Dephoure N."/>
            <person name="O'Shea E.K."/>
            <person name="Weissman J.S."/>
        </authorList>
    </citation>
    <scope>LEVEL OF PROTEIN EXPRESSION [LARGE SCALE ANALYSIS]</scope>
</reference>
<reference key="10">
    <citation type="journal article" date="2007" name="J. Proteome Res.">
        <title>Large-scale phosphorylation analysis of alpha-factor-arrested Saccharomyces cerevisiae.</title>
        <authorList>
            <person name="Li X."/>
            <person name="Gerber S.A."/>
            <person name="Rudner A.D."/>
            <person name="Beausoleil S.A."/>
            <person name="Haas W."/>
            <person name="Villen J."/>
            <person name="Elias J.E."/>
            <person name="Gygi S.P."/>
        </authorList>
    </citation>
    <scope>PHOSPHORYLATION [LARGE SCALE ANALYSIS] AT SER-79</scope>
    <scope>IDENTIFICATION BY MASS SPECTROMETRY [LARGE SCALE ANALYSIS]</scope>
    <source>
        <strain>ADR376</strain>
    </source>
</reference>
<reference key="11">
    <citation type="journal article" date="2007" name="Proc. Natl. Acad. Sci. U.S.A.">
        <title>Analysis of phosphorylation sites on proteins from Saccharomyces cerevisiae by electron transfer dissociation (ETD) mass spectrometry.</title>
        <authorList>
            <person name="Chi A."/>
            <person name="Huttenhower C."/>
            <person name="Geer L.Y."/>
            <person name="Coon J.J."/>
            <person name="Syka J.E.P."/>
            <person name="Bai D.L."/>
            <person name="Shabanowitz J."/>
            <person name="Burke D.J."/>
            <person name="Troyanskaya O.G."/>
            <person name="Hunt D.F."/>
        </authorList>
    </citation>
    <scope>IDENTIFICATION BY MASS SPECTROMETRY [LARGE SCALE ANALYSIS]</scope>
</reference>
<reference key="12">
    <citation type="journal article" date="2009" name="Science">
        <title>Global analysis of Cdk1 substrate phosphorylation sites provides insights into evolution.</title>
        <authorList>
            <person name="Holt L.J."/>
            <person name="Tuch B.B."/>
            <person name="Villen J."/>
            <person name="Johnson A.D."/>
            <person name="Gygi S.P."/>
            <person name="Morgan D.O."/>
        </authorList>
    </citation>
    <scope>PHOSPHORYLATION [LARGE SCALE ANALYSIS] AT SER-79 AND SER-86</scope>
    <scope>IDENTIFICATION BY MASS SPECTROMETRY [LARGE SCALE ANALYSIS]</scope>
</reference>
<reference key="13">
    <citation type="journal article" date="2011" name="J. Biol. Chem.">
        <title>The ribosomal L1 protuberance in yeast is methylated on a lysine residue catalyzed by a seven beta-strand methyltransferase.</title>
        <authorList>
            <person name="Webb K.J."/>
            <person name="Al-Hadid Q."/>
            <person name="Zurita-Lopez C.I."/>
            <person name="Young B.D."/>
            <person name="Lipson R.S."/>
            <person name="Clarke S.G."/>
        </authorList>
    </citation>
    <scope>METHYLATION AT LYS-47</scope>
    <scope>IDENTIFICATION BY MASS SPECTROMETRY</scope>
</reference>
<reference key="14">
    <citation type="journal article" date="2011" name="Science">
        <title>The structure of the eukaryotic ribosome at 3.0 A resolution.</title>
        <authorList>
            <person name="Ben-Shem A."/>
            <person name="Garreau de Loubresse N."/>
            <person name="Melnikov S."/>
            <person name="Jenner L."/>
            <person name="Yusupova G."/>
            <person name="Yusupov M."/>
        </authorList>
    </citation>
    <scope>SUBUNIT</scope>
    <scope>SUBCELLULAR LOCATION</scope>
</reference>
<reference key="15">
    <citation type="journal article" date="2012" name="Proc. Natl. Acad. Sci. U.S.A.">
        <title>N-terminal acetylome analyses and functional insights of the N-terminal acetyltransferase NatB.</title>
        <authorList>
            <person name="Van Damme P."/>
            <person name="Lasa M."/>
            <person name="Polevoda B."/>
            <person name="Gazquez C."/>
            <person name="Elosegui-Artola A."/>
            <person name="Kim D.S."/>
            <person name="De Juan-Pardo E."/>
            <person name="Demeyer K."/>
            <person name="Hole K."/>
            <person name="Larrea E."/>
            <person name="Timmerman E."/>
            <person name="Prieto J."/>
            <person name="Arnesen T."/>
            <person name="Sherman F."/>
            <person name="Gevaert K."/>
            <person name="Aldabe R."/>
        </authorList>
    </citation>
    <scope>ACETYLATION [LARGE SCALE ANALYSIS] AT SER-2</scope>
    <scope>CLEAVAGE OF INITIATOR METHIONINE [LARGE SCALE ANALYSIS]</scope>
    <scope>IDENTIFICATION BY MASS SPECTROMETRY [LARGE SCALE ANALYSIS]</scope>
</reference>
<reference key="16">
    <citation type="journal article" date="2014" name="Curr. Opin. Struct. Biol.">
        <title>A new system for naming ribosomal proteins.</title>
        <authorList>
            <person name="Ban N."/>
            <person name="Beckmann R."/>
            <person name="Cate J.H.D."/>
            <person name="Dinman J.D."/>
            <person name="Dragon F."/>
            <person name="Ellis S.R."/>
            <person name="Lafontaine D.L.J."/>
            <person name="Lindahl L."/>
            <person name="Liljas A."/>
            <person name="Lipton J.M."/>
            <person name="McAlear M.A."/>
            <person name="Moore P.B."/>
            <person name="Noller H.F."/>
            <person name="Ortega J."/>
            <person name="Panse V.G."/>
            <person name="Ramakrishnan V."/>
            <person name="Spahn C.M.T."/>
            <person name="Steitz T.A."/>
            <person name="Tchorzewski M."/>
            <person name="Tollervey D."/>
            <person name="Warren A.J."/>
            <person name="Williamson J.R."/>
            <person name="Wilson D."/>
            <person name="Yonath A."/>
            <person name="Yusupov M."/>
        </authorList>
    </citation>
    <scope>NOMENCLATURE</scope>
</reference>
<sequence>MSKITSSQVREHVKELLKYSNETKKRNFLETVELQVGLKNYDPQRDKRFSGSLKLPNCPRPNMSICIFGDAFDVDRAKSCGVDAMSVDDLKKLNKNKKLIKKLSKKYNAFIASEVLIKQVPRLLGPQLSKAGKFPTPVSHNDDLYGKVTDVRSTIKFQLKKVLCLAVAVGNVEMEEDVLVNQILMSVNFFVSLLKKNWQNVGSLVVKSSMGPAFRLY</sequence>
<name>RL1B_YEAST</name>
<keyword id="KW-0002">3D-structure</keyword>
<keyword id="KW-0007">Acetylation</keyword>
<keyword id="KW-0963">Cytoplasm</keyword>
<keyword id="KW-0488">Methylation</keyword>
<keyword id="KW-0597">Phosphoprotein</keyword>
<keyword id="KW-1185">Reference proteome</keyword>
<keyword id="KW-0687">Ribonucleoprotein</keyword>
<keyword id="KW-0689">Ribosomal protein</keyword>
<dbReference type="EMBL" id="X70986">
    <property type="protein sequence ID" value="CAA50315.1"/>
    <property type="molecule type" value="Genomic_DNA"/>
</dbReference>
<dbReference type="EMBL" id="X92670">
    <property type="protein sequence ID" value="CAA63361.1"/>
    <property type="molecule type" value="Genomic_DNA"/>
</dbReference>
<dbReference type="EMBL" id="Z72657">
    <property type="protein sequence ID" value="CAA96846.1"/>
    <property type="molecule type" value="Genomic_DNA"/>
</dbReference>
<dbReference type="EMBL" id="BK006941">
    <property type="protein sequence ID" value="DAA07975.1"/>
    <property type="molecule type" value="Genomic_DNA"/>
</dbReference>
<dbReference type="PIR" id="S53893">
    <property type="entry name" value="S53893"/>
</dbReference>
<dbReference type="RefSeq" id="NP_011380.3">
    <property type="nucleotide sequence ID" value="NM_001181000.3"/>
</dbReference>
<dbReference type="PDB" id="5JCS">
    <property type="method" value="EM"/>
    <property type="resolution" value="9.50 A"/>
    <property type="chains" value="I=1-217"/>
</dbReference>
<dbReference type="PDBsum" id="5JCS"/>
<dbReference type="SMR" id="P0CX44"/>
<dbReference type="BioGRID" id="33117">
    <property type="interactions" value="203"/>
</dbReference>
<dbReference type="BioGRID" id="35965">
    <property type="interactions" value="224"/>
</dbReference>
<dbReference type="ComplexPortal" id="CPX-1601">
    <property type="entry name" value="60S cytosolic large ribosomal subunit"/>
</dbReference>
<dbReference type="FunCoup" id="P0CX44">
    <property type="interactions" value="911"/>
</dbReference>
<dbReference type="IntAct" id="P0CX44">
    <property type="interactions" value="6"/>
</dbReference>
<dbReference type="MINT" id="P0CX44"/>
<dbReference type="iPTMnet" id="P0CX44"/>
<dbReference type="EnsemblFungi" id="YGL135W_mRNA">
    <property type="protein sequence ID" value="YGL135W"/>
    <property type="gene ID" value="YGL135W"/>
</dbReference>
<dbReference type="EnsemblFungi" id="YPL220W_mRNA">
    <property type="protein sequence ID" value="YPL220W"/>
    <property type="gene ID" value="YPL220W"/>
</dbReference>
<dbReference type="GeneID" id="852742"/>
<dbReference type="KEGG" id="sce:YGL135W"/>
<dbReference type="KEGG" id="sce:YPL220W"/>
<dbReference type="AGR" id="SGD:S000003103"/>
<dbReference type="SGD" id="S000003103">
    <property type="gene designation" value="RPL1B"/>
</dbReference>
<dbReference type="VEuPathDB" id="FungiDB:YGL135W"/>
<dbReference type="VEuPathDB" id="FungiDB:YPL220W"/>
<dbReference type="GeneTree" id="ENSGT00940000171664"/>
<dbReference type="HOGENOM" id="CLU_062853_3_0_1"/>
<dbReference type="InParanoid" id="P0CX44"/>
<dbReference type="OMA" id="GPRNKMP"/>
<dbReference type="OrthoDB" id="2449818at2759"/>
<dbReference type="BioCyc" id="YEAST:G3O-30630-MONOMER"/>
<dbReference type="Reactome" id="R-SCE-156827">
    <property type="pathway name" value="L13a-mediated translational silencing of Ceruloplasmin expression"/>
</dbReference>
<dbReference type="Reactome" id="R-SCE-1799339">
    <property type="pathway name" value="SRP-dependent cotranslational protein targeting to membrane"/>
</dbReference>
<dbReference type="Reactome" id="R-SCE-72689">
    <property type="pathway name" value="Formation of a pool of free 40S subunits"/>
</dbReference>
<dbReference type="Reactome" id="R-SCE-72706">
    <property type="pathway name" value="GTP hydrolysis and joining of the 60S ribosomal subunit"/>
</dbReference>
<dbReference type="Reactome" id="R-SCE-975956">
    <property type="pathway name" value="Nonsense Mediated Decay (NMD) independent of the Exon Junction Complex (EJC)"/>
</dbReference>
<dbReference type="Reactome" id="R-SCE-975957">
    <property type="pathway name" value="Nonsense Mediated Decay (NMD) enhanced by the Exon Junction Complex (EJC)"/>
</dbReference>
<dbReference type="ChiTaRS" id="RPL1B">
    <property type="organism name" value="yeast"/>
</dbReference>
<dbReference type="PRO" id="PR:P0CX44"/>
<dbReference type="Proteomes" id="UP000002311">
    <property type="component" value="Chromosome VII"/>
</dbReference>
<dbReference type="RNAct" id="P0CX44">
    <property type="molecule type" value="protein"/>
</dbReference>
<dbReference type="ExpressionAtlas" id="P0CX44">
    <property type="expression patterns" value="baseline and differential"/>
</dbReference>
<dbReference type="GO" id="GO:0005829">
    <property type="term" value="C:cytosol"/>
    <property type="evidence" value="ECO:0000304"/>
    <property type="project" value="Reactome"/>
</dbReference>
<dbReference type="GO" id="GO:0022625">
    <property type="term" value="C:cytosolic large ribosomal subunit"/>
    <property type="evidence" value="ECO:0000314"/>
    <property type="project" value="SGD"/>
</dbReference>
<dbReference type="GO" id="GO:0003723">
    <property type="term" value="F:RNA binding"/>
    <property type="evidence" value="ECO:0000318"/>
    <property type="project" value="GO_Central"/>
</dbReference>
<dbReference type="GO" id="GO:0003735">
    <property type="term" value="F:structural constituent of ribosome"/>
    <property type="evidence" value="ECO:0000305"/>
    <property type="project" value="SGD"/>
</dbReference>
<dbReference type="GO" id="GO:0002181">
    <property type="term" value="P:cytoplasmic translation"/>
    <property type="evidence" value="ECO:0000305"/>
    <property type="project" value="SGD"/>
</dbReference>
<dbReference type="GO" id="GO:0000055">
    <property type="term" value="P:ribosomal large subunit export from nucleus"/>
    <property type="evidence" value="ECO:0000315"/>
    <property type="project" value="SGD"/>
</dbReference>
<dbReference type="CDD" id="cd00403">
    <property type="entry name" value="Ribosomal_L1"/>
    <property type="match status" value="1"/>
</dbReference>
<dbReference type="FunFam" id="3.30.190.20:FF:000006">
    <property type="entry name" value="Ribosomal protein"/>
    <property type="match status" value="1"/>
</dbReference>
<dbReference type="FunFam" id="3.40.50.790:FF:000002">
    <property type="entry name" value="Ribosomal protein"/>
    <property type="match status" value="1"/>
</dbReference>
<dbReference type="FunFam" id="3.30.190.20:FF:000009">
    <property type="entry name" value="Ribosomal protein L10a"/>
    <property type="match status" value="1"/>
</dbReference>
<dbReference type="Gene3D" id="3.30.190.20">
    <property type="match status" value="1"/>
</dbReference>
<dbReference type="Gene3D" id="3.40.50.790">
    <property type="match status" value="1"/>
</dbReference>
<dbReference type="InterPro" id="IPR050257">
    <property type="entry name" value="eL8/uL1-like"/>
</dbReference>
<dbReference type="InterPro" id="IPR002143">
    <property type="entry name" value="Ribosomal_uL1"/>
</dbReference>
<dbReference type="InterPro" id="IPR023674">
    <property type="entry name" value="Ribosomal_uL1-like"/>
</dbReference>
<dbReference type="InterPro" id="IPR028364">
    <property type="entry name" value="Ribosomal_uL1/biogenesis"/>
</dbReference>
<dbReference type="InterPro" id="IPR016095">
    <property type="entry name" value="Ribosomal_uL1_3-a/b-sand"/>
</dbReference>
<dbReference type="InterPro" id="IPR023673">
    <property type="entry name" value="Ribosomal_uL1_CS"/>
</dbReference>
<dbReference type="PANTHER" id="PTHR23105">
    <property type="entry name" value="RIBOSOMAL PROTEIN L7AE FAMILY MEMBER"/>
    <property type="match status" value="1"/>
</dbReference>
<dbReference type="Pfam" id="PF00687">
    <property type="entry name" value="Ribosomal_L1"/>
    <property type="match status" value="1"/>
</dbReference>
<dbReference type="PIRSF" id="PIRSF002155">
    <property type="entry name" value="Ribosomal_L1"/>
    <property type="match status" value="1"/>
</dbReference>
<dbReference type="SUPFAM" id="SSF56808">
    <property type="entry name" value="Ribosomal protein L1"/>
    <property type="match status" value="1"/>
</dbReference>
<dbReference type="PROSITE" id="PS01199">
    <property type="entry name" value="RIBOSOMAL_L1"/>
    <property type="match status" value="1"/>
</dbReference>
<organism>
    <name type="scientific">Saccharomyces cerevisiae (strain ATCC 204508 / S288c)</name>
    <name type="common">Baker's yeast</name>
    <dbReference type="NCBI Taxonomy" id="559292"/>
    <lineage>
        <taxon>Eukaryota</taxon>
        <taxon>Fungi</taxon>
        <taxon>Dikarya</taxon>
        <taxon>Ascomycota</taxon>
        <taxon>Saccharomycotina</taxon>
        <taxon>Saccharomycetes</taxon>
        <taxon>Saccharomycetales</taxon>
        <taxon>Saccharomycetaceae</taxon>
        <taxon>Saccharomyces</taxon>
    </lineage>
</organism>
<protein>
    <recommendedName>
        <fullName evidence="7">Large ribosomal subunit protein uL1B</fullName>
    </recommendedName>
    <alternativeName>
        <fullName evidence="8">60S ribosomal protein L1-B</fullName>
    </alternativeName>
    <alternativeName>
        <fullName>L10a</fullName>
    </alternativeName>
</protein>
<comment type="function">
    <text evidence="10">Component of the ribosome, a large ribonucleoprotein complex responsible for the synthesis of proteins in the cell. The small ribosomal subunit (SSU) binds messenger RNAs (mRNAs) and translates the encoded message by selecting cognate aminoacyl-transfer RNA (tRNA) molecules. The large subunit (LSU) contains the ribosomal catalytic site termed the peptidyl transferase center (PTC), which catalyzes the formation of peptide bonds, thereby polymerizing the amino acids delivered by tRNAs into a polypeptide chain. The nascent polypeptides leave the ribosome through a tunnel in the LSU and interact with protein factors that function in enzymatic processing, targeting, and the membrane insertion of nascent chains at the exit of the ribosomal tunnel. uL1 forms part of the L1 stalk, a mobile element that plays a role in evacuating the exit-site tRNA.</text>
</comment>
<comment type="subunit">
    <text evidence="6 11">Component of the large ribosomal subunit (LSU). Mature yeast ribosomes consist of a small (40S) and a large (60S) subunit. The 40S small subunit contains 1 molecule of ribosomal RNA (18S rRNA) and 33 different proteins (encoded by 57 genes). The large 60S subunit contains 3 rRNA molecules (25S, 5.8S and 5S rRNA) and 46 different proteins (encoded by 81 genes). uL1 forms part of the L1 stalk (PubMed:22096102, PubMed:9559554).</text>
</comment>
<comment type="subcellular location">
    <subcellularLocation>
        <location evidence="3 6">Cytoplasm</location>
    </subcellularLocation>
</comment>
<comment type="PTM">
    <text evidence="1">N-terminally acetylated by acetyltransferase NatA.</text>
</comment>
<comment type="mass spectrometry">
    <text>Average mass with 1 acetylation and 1 methylation modification.</text>
</comment>
<comment type="miscellaneous">
    <text evidence="4">Present with 265000 molecules/cell in log phase SD medium.</text>
</comment>
<comment type="miscellaneous">
    <text evidence="9">There are 2 genes for uL1 in yeast.</text>
</comment>
<comment type="similarity">
    <text evidence="9">Belongs to the universal ribosomal protein uL1 family.</text>
</comment>
<gene>
    <name evidence="8" type="primary">RPL1B</name>
    <name type="synonym">SSM1B</name>
    <name type="synonym">SSM2</name>
    <name type="ordered locus">YGL135W</name>
    <name type="ORF">G2834</name>
</gene>
<accession>P0CX44</accession>
<accession>D6VU14</accession>
<accession>P53030</accession>
<proteinExistence type="evidence at protein level"/>
<evidence type="ECO:0000269" key="1">
    <source>
    </source>
</evidence>
<evidence type="ECO:0000269" key="2">
    <source>
    </source>
</evidence>
<evidence type="ECO:0000269" key="3">
    <source>
    </source>
</evidence>
<evidence type="ECO:0000269" key="4">
    <source>
    </source>
</evidence>
<evidence type="ECO:0000269" key="5">
    <source>
    </source>
</evidence>
<evidence type="ECO:0000269" key="6">
    <source>
    </source>
</evidence>
<evidence type="ECO:0000303" key="7">
    <source>
    </source>
</evidence>
<evidence type="ECO:0000303" key="8">
    <source>
    </source>
</evidence>
<evidence type="ECO:0000305" key="9"/>
<evidence type="ECO:0000305" key="10">
    <source>
    </source>
</evidence>
<evidence type="ECO:0000305" key="11">
    <source>
    </source>
</evidence>
<evidence type="ECO:0007744" key="12">
    <source>
    </source>
</evidence>
<evidence type="ECO:0007744" key="13">
    <source>
    </source>
</evidence>
<evidence type="ECO:0007744" key="14">
    <source>
    </source>
</evidence>
<feature type="initiator methionine" description="Removed" evidence="1 14">
    <location>
        <position position="1"/>
    </location>
</feature>
<feature type="chain" id="PRO_0000409768" description="Large ribosomal subunit protein uL1B">
    <location>
        <begin position="2"/>
        <end position="217"/>
    </location>
</feature>
<feature type="modified residue" description="N-acetylserine" evidence="1 14">
    <location>
        <position position="2"/>
    </location>
</feature>
<feature type="modified residue" description="N6-methyllysine; by RKM5" evidence="5">
    <location>
        <position position="47"/>
    </location>
</feature>
<feature type="modified residue" description="Phosphoserine" evidence="12 13">
    <location>
        <position position="79"/>
    </location>
</feature>
<feature type="modified residue" description="Phosphoserine" evidence="13">
    <location>
        <position position="86"/>
    </location>
</feature>